<protein>
    <recommendedName>
        <fullName evidence="1">Ribosomal RNA small subunit methyltransferase A</fullName>
        <ecNumber evidence="1">2.1.1.182</ecNumber>
    </recommendedName>
    <alternativeName>
        <fullName evidence="1">16S rRNA (adenine(1518)-N(6)/adenine(1519)-N(6))-dimethyltransferase</fullName>
    </alternativeName>
    <alternativeName>
        <fullName evidence="1">16S rRNA dimethyladenosine transferase</fullName>
    </alternativeName>
    <alternativeName>
        <fullName evidence="1">16S rRNA dimethylase</fullName>
    </alternativeName>
    <alternativeName>
        <fullName evidence="1">S-adenosylmethionine-6-N', N'-adenosyl(rRNA) dimethyltransferase</fullName>
    </alternativeName>
</protein>
<feature type="chain" id="PRO_1000056598" description="Ribosomal RNA small subunit methyltransferase A">
    <location>
        <begin position="1"/>
        <end position="281"/>
    </location>
</feature>
<feature type="binding site" evidence="1">
    <location>
        <position position="36"/>
    </location>
    <ligand>
        <name>S-adenosyl-L-methionine</name>
        <dbReference type="ChEBI" id="CHEBI:59789"/>
    </ligand>
</feature>
<feature type="binding site" evidence="1">
    <location>
        <position position="38"/>
    </location>
    <ligand>
        <name>S-adenosyl-L-methionine</name>
        <dbReference type="ChEBI" id="CHEBI:59789"/>
    </ligand>
</feature>
<feature type="binding site" evidence="1">
    <location>
        <position position="63"/>
    </location>
    <ligand>
        <name>S-adenosyl-L-methionine</name>
        <dbReference type="ChEBI" id="CHEBI:59789"/>
    </ligand>
</feature>
<feature type="binding site" evidence="1">
    <location>
        <position position="84"/>
    </location>
    <ligand>
        <name>S-adenosyl-L-methionine</name>
        <dbReference type="ChEBI" id="CHEBI:59789"/>
    </ligand>
</feature>
<feature type="binding site" evidence="1">
    <location>
        <position position="109"/>
    </location>
    <ligand>
        <name>S-adenosyl-L-methionine</name>
        <dbReference type="ChEBI" id="CHEBI:59789"/>
    </ligand>
</feature>
<feature type="binding site" evidence="1">
    <location>
        <position position="127"/>
    </location>
    <ligand>
        <name>S-adenosyl-L-methionine</name>
        <dbReference type="ChEBI" id="CHEBI:59789"/>
    </ligand>
</feature>
<proteinExistence type="inferred from homology"/>
<organism>
    <name type="scientific">Borreliella afzelii (strain PKo)</name>
    <name type="common">Borrelia afzelii</name>
    <dbReference type="NCBI Taxonomy" id="390236"/>
    <lineage>
        <taxon>Bacteria</taxon>
        <taxon>Pseudomonadati</taxon>
        <taxon>Spirochaetota</taxon>
        <taxon>Spirochaetia</taxon>
        <taxon>Spirochaetales</taxon>
        <taxon>Borreliaceae</taxon>
        <taxon>Borreliella</taxon>
    </lineage>
</organism>
<name>RSMA_BORAP</name>
<comment type="function">
    <text evidence="1">Specifically dimethylates two adjacent adenosines (A1518 and A1519) in the loop of a conserved hairpin near the 3'-end of 16S rRNA in the 30S particle. May play a critical role in biogenesis of 30S subunits.</text>
</comment>
<comment type="catalytic activity">
    <reaction evidence="1">
        <text>adenosine(1518)/adenosine(1519) in 16S rRNA + 4 S-adenosyl-L-methionine = N(6)-dimethyladenosine(1518)/N(6)-dimethyladenosine(1519) in 16S rRNA + 4 S-adenosyl-L-homocysteine + 4 H(+)</text>
        <dbReference type="Rhea" id="RHEA:19609"/>
        <dbReference type="Rhea" id="RHEA-COMP:10232"/>
        <dbReference type="Rhea" id="RHEA-COMP:10233"/>
        <dbReference type="ChEBI" id="CHEBI:15378"/>
        <dbReference type="ChEBI" id="CHEBI:57856"/>
        <dbReference type="ChEBI" id="CHEBI:59789"/>
        <dbReference type="ChEBI" id="CHEBI:74411"/>
        <dbReference type="ChEBI" id="CHEBI:74493"/>
        <dbReference type="EC" id="2.1.1.182"/>
    </reaction>
</comment>
<comment type="subcellular location">
    <subcellularLocation>
        <location evidence="1">Cytoplasm</location>
    </subcellularLocation>
</comment>
<comment type="similarity">
    <text evidence="1">Belongs to the class I-like SAM-binding methyltransferase superfamily. rRNA adenine N(6)-methyltransferase family. RsmA subfamily.</text>
</comment>
<accession>Q0SMR8</accession>
<accession>G0IQE0</accession>
<keyword id="KW-0963">Cytoplasm</keyword>
<keyword id="KW-0489">Methyltransferase</keyword>
<keyword id="KW-0694">RNA-binding</keyword>
<keyword id="KW-0698">rRNA processing</keyword>
<keyword id="KW-0949">S-adenosyl-L-methionine</keyword>
<keyword id="KW-0808">Transferase</keyword>
<gene>
    <name evidence="1" type="primary">rsmA</name>
    <name evidence="1" type="synonym">ksgA</name>
    <name type="ordered locus">BAPKO_0621</name>
    <name type="ordered locus">BafPKo_0606</name>
</gene>
<evidence type="ECO:0000255" key="1">
    <source>
        <dbReference type="HAMAP-Rule" id="MF_00607"/>
    </source>
</evidence>
<dbReference type="EC" id="2.1.1.182" evidence="1"/>
<dbReference type="EMBL" id="CP000395">
    <property type="protein sequence ID" value="ABH01860.1"/>
    <property type="molecule type" value="Genomic_DNA"/>
</dbReference>
<dbReference type="EMBL" id="CP002933">
    <property type="protein sequence ID" value="AEL69810.1"/>
    <property type="molecule type" value="Genomic_DNA"/>
</dbReference>
<dbReference type="RefSeq" id="WP_011601107.1">
    <property type="nucleotide sequence ID" value="NC_008277.1"/>
</dbReference>
<dbReference type="SMR" id="Q0SMR8"/>
<dbReference type="STRING" id="29518.BLA32_01315"/>
<dbReference type="KEGG" id="baf:BAPKO_0621"/>
<dbReference type="KEGG" id="bafz:BafPKo_0606"/>
<dbReference type="PATRIC" id="fig|390236.22.peg.583"/>
<dbReference type="eggNOG" id="COG0030">
    <property type="taxonomic scope" value="Bacteria"/>
</dbReference>
<dbReference type="HOGENOM" id="CLU_041220_0_1_12"/>
<dbReference type="OrthoDB" id="9814755at2"/>
<dbReference type="Proteomes" id="UP000005216">
    <property type="component" value="Chromosome"/>
</dbReference>
<dbReference type="GO" id="GO:0005829">
    <property type="term" value="C:cytosol"/>
    <property type="evidence" value="ECO:0007669"/>
    <property type="project" value="TreeGrafter"/>
</dbReference>
<dbReference type="GO" id="GO:0052908">
    <property type="term" value="F:16S rRNA (adenine(1518)-N(6)/adenine(1519)-N(6))-dimethyltransferase activity"/>
    <property type="evidence" value="ECO:0007669"/>
    <property type="project" value="UniProtKB-EC"/>
</dbReference>
<dbReference type="GO" id="GO:0003723">
    <property type="term" value="F:RNA binding"/>
    <property type="evidence" value="ECO:0007669"/>
    <property type="project" value="UniProtKB-KW"/>
</dbReference>
<dbReference type="CDD" id="cd02440">
    <property type="entry name" value="AdoMet_MTases"/>
    <property type="match status" value="1"/>
</dbReference>
<dbReference type="Gene3D" id="1.10.8.100">
    <property type="entry name" value="Ribosomal RNA adenine dimethylase-like, domain 2"/>
    <property type="match status" value="1"/>
</dbReference>
<dbReference type="Gene3D" id="3.40.50.150">
    <property type="entry name" value="Vaccinia Virus protein VP39"/>
    <property type="match status" value="1"/>
</dbReference>
<dbReference type="HAMAP" id="MF_00607">
    <property type="entry name" value="16SrRNA_methyltr_A"/>
    <property type="match status" value="1"/>
</dbReference>
<dbReference type="InterPro" id="IPR001737">
    <property type="entry name" value="KsgA/Erm"/>
</dbReference>
<dbReference type="InterPro" id="IPR023165">
    <property type="entry name" value="rRNA_Ade_diMease-like_C"/>
</dbReference>
<dbReference type="InterPro" id="IPR020596">
    <property type="entry name" value="rRNA_Ade_Mease_Trfase_CS"/>
</dbReference>
<dbReference type="InterPro" id="IPR020598">
    <property type="entry name" value="rRNA_Ade_methylase_Trfase_N"/>
</dbReference>
<dbReference type="InterPro" id="IPR011530">
    <property type="entry name" value="rRNA_adenine_dimethylase"/>
</dbReference>
<dbReference type="InterPro" id="IPR029063">
    <property type="entry name" value="SAM-dependent_MTases_sf"/>
</dbReference>
<dbReference type="NCBIfam" id="TIGR00755">
    <property type="entry name" value="ksgA"/>
    <property type="match status" value="1"/>
</dbReference>
<dbReference type="PANTHER" id="PTHR11727">
    <property type="entry name" value="DIMETHYLADENOSINE TRANSFERASE"/>
    <property type="match status" value="1"/>
</dbReference>
<dbReference type="PANTHER" id="PTHR11727:SF7">
    <property type="entry name" value="DIMETHYLADENOSINE TRANSFERASE-RELATED"/>
    <property type="match status" value="1"/>
</dbReference>
<dbReference type="Pfam" id="PF00398">
    <property type="entry name" value="RrnaAD"/>
    <property type="match status" value="1"/>
</dbReference>
<dbReference type="SMART" id="SM00650">
    <property type="entry name" value="rADc"/>
    <property type="match status" value="1"/>
</dbReference>
<dbReference type="SUPFAM" id="SSF53335">
    <property type="entry name" value="S-adenosyl-L-methionine-dependent methyltransferases"/>
    <property type="match status" value="1"/>
</dbReference>
<dbReference type="PROSITE" id="PS01131">
    <property type="entry name" value="RRNA_A_DIMETH"/>
    <property type="match status" value="1"/>
</dbReference>
<dbReference type="PROSITE" id="PS51689">
    <property type="entry name" value="SAM_RNA_A_N6_MT"/>
    <property type="match status" value="1"/>
</dbReference>
<sequence>MLLSLLSMNINYNSITSIKQTLKEKKIAPRKLWGQNYLINENIRQKIIESLDIKENEKIWEIGPGLGAMTDILLKKTNLLTAFEIDLKYSEILNEKFGKLKNFKLIKGDFLKKYPNENKNIDKIFSNLPYNIASKVISKLIEENFLKEMVFTVQKELADRITAKINSKNYSSFTVLVQSHFTVIKIIDIGGNNFYPAPKVKSTTLKLIPKKHNIKDFKEFNKLIRTVFSSRRKKLKNTIINFITNKAILRENFLKEYLDKRPENISVEEFIQISNTLTAYH</sequence>
<reference key="1">
    <citation type="journal article" date="2006" name="BMC Genomics">
        <title>Comparative genome analysis: selection pressure on the Borrelia vls cassettes is essential for infectivity.</title>
        <authorList>
            <person name="Gloeckner G."/>
            <person name="Schulte-Spechtel U."/>
            <person name="Schilhabel M."/>
            <person name="Felder M."/>
            <person name="Suehnel J."/>
            <person name="Wilske B."/>
            <person name="Platzer M."/>
        </authorList>
    </citation>
    <scope>NUCLEOTIDE SEQUENCE [LARGE SCALE GENOMIC DNA]</scope>
    <source>
        <strain>PKo</strain>
    </source>
</reference>
<reference key="2">
    <citation type="journal article" date="2011" name="J. Bacteriol.">
        <title>Whole-genome sequences of two Borrelia afzelii and two Borrelia garinii Lyme disease agent isolates.</title>
        <authorList>
            <person name="Casjens S.R."/>
            <person name="Mongodin E.F."/>
            <person name="Qiu W.G."/>
            <person name="Dunn J.J."/>
            <person name="Luft B.J."/>
            <person name="Fraser-Liggett C.M."/>
            <person name="Schutzer S.E."/>
        </authorList>
    </citation>
    <scope>NUCLEOTIDE SEQUENCE [LARGE SCALE GENOMIC DNA]</scope>
    <source>
        <strain>PKo</strain>
    </source>
</reference>